<name>H103_CHICK</name>
<keyword id="KW-0158">Chromosome</keyword>
<keyword id="KW-0238">DNA-binding</keyword>
<keyword id="KW-0539">Nucleus</keyword>
<keyword id="KW-1185">Reference proteome</keyword>
<dbReference type="EMBL" id="M17021">
    <property type="protein sequence ID" value="AAA48787.1"/>
    <property type="molecule type" value="Genomic_DNA"/>
</dbReference>
<dbReference type="PIR" id="D28456">
    <property type="entry name" value="D28456"/>
</dbReference>
<dbReference type="RefSeq" id="NP_001292314.1">
    <property type="nucleotide sequence ID" value="NM_001305385.2"/>
</dbReference>
<dbReference type="SMR" id="P08285"/>
<dbReference type="FunCoup" id="P08285">
    <property type="interactions" value="56"/>
</dbReference>
<dbReference type="STRING" id="9031.ENSGALP00000048542"/>
<dbReference type="GlyGen" id="P08285">
    <property type="glycosylation" value="1 site"/>
</dbReference>
<dbReference type="GeneID" id="100858354"/>
<dbReference type="KEGG" id="gga:100858354"/>
<dbReference type="CTD" id="100858354"/>
<dbReference type="VEuPathDB" id="HostDB:geneid_100858354"/>
<dbReference type="InParanoid" id="P08285"/>
<dbReference type="OMA" id="HGSEREM"/>
<dbReference type="OrthoDB" id="9634976at2759"/>
<dbReference type="PRO" id="PR:P08285"/>
<dbReference type="Proteomes" id="UP000000539">
    <property type="component" value="Chromosome 1"/>
</dbReference>
<dbReference type="Bgee" id="ENSGALG00000037167">
    <property type="expression patterns" value="Expressed in skeletal muscle tissue and 9 other cell types or tissues"/>
</dbReference>
<dbReference type="GO" id="GO:0000786">
    <property type="term" value="C:nucleosome"/>
    <property type="evidence" value="ECO:0007669"/>
    <property type="project" value="InterPro"/>
</dbReference>
<dbReference type="GO" id="GO:0005634">
    <property type="term" value="C:nucleus"/>
    <property type="evidence" value="ECO:0000318"/>
    <property type="project" value="GO_Central"/>
</dbReference>
<dbReference type="GO" id="GO:0003690">
    <property type="term" value="F:double-stranded DNA binding"/>
    <property type="evidence" value="ECO:0000318"/>
    <property type="project" value="GO_Central"/>
</dbReference>
<dbReference type="GO" id="GO:0031492">
    <property type="term" value="F:nucleosomal DNA binding"/>
    <property type="evidence" value="ECO:0000318"/>
    <property type="project" value="GO_Central"/>
</dbReference>
<dbReference type="GO" id="GO:0030527">
    <property type="term" value="F:structural constituent of chromatin"/>
    <property type="evidence" value="ECO:0007669"/>
    <property type="project" value="InterPro"/>
</dbReference>
<dbReference type="GO" id="GO:0030261">
    <property type="term" value="P:chromosome condensation"/>
    <property type="evidence" value="ECO:0000318"/>
    <property type="project" value="GO_Central"/>
</dbReference>
<dbReference type="GO" id="GO:0045910">
    <property type="term" value="P:negative regulation of DNA recombination"/>
    <property type="evidence" value="ECO:0000318"/>
    <property type="project" value="GO_Central"/>
</dbReference>
<dbReference type="GO" id="GO:0006334">
    <property type="term" value="P:nucleosome assembly"/>
    <property type="evidence" value="ECO:0007669"/>
    <property type="project" value="InterPro"/>
</dbReference>
<dbReference type="CDD" id="cd00073">
    <property type="entry name" value="H15"/>
    <property type="match status" value="1"/>
</dbReference>
<dbReference type="FunFam" id="1.10.10.10:FF:000075">
    <property type="entry name" value="Histone H1 like"/>
    <property type="match status" value="1"/>
</dbReference>
<dbReference type="Gene3D" id="1.10.10.10">
    <property type="entry name" value="Winged helix-like DNA-binding domain superfamily/Winged helix DNA-binding domain"/>
    <property type="match status" value="1"/>
</dbReference>
<dbReference type="InterPro" id="IPR005819">
    <property type="entry name" value="H1/H5"/>
</dbReference>
<dbReference type="InterPro" id="IPR005818">
    <property type="entry name" value="Histone_H1/H5_H15"/>
</dbReference>
<dbReference type="InterPro" id="IPR036388">
    <property type="entry name" value="WH-like_DNA-bd_sf"/>
</dbReference>
<dbReference type="InterPro" id="IPR036390">
    <property type="entry name" value="WH_DNA-bd_sf"/>
</dbReference>
<dbReference type="Pfam" id="PF00538">
    <property type="entry name" value="Linker_histone"/>
    <property type="match status" value="1"/>
</dbReference>
<dbReference type="PRINTS" id="PR00624">
    <property type="entry name" value="HISTONEH5"/>
</dbReference>
<dbReference type="SMART" id="SM00526">
    <property type="entry name" value="H15"/>
    <property type="match status" value="1"/>
</dbReference>
<dbReference type="SUPFAM" id="SSF46785">
    <property type="entry name" value="Winged helix' DNA-binding domain"/>
    <property type="match status" value="1"/>
</dbReference>
<dbReference type="PROSITE" id="PS51504">
    <property type="entry name" value="H15"/>
    <property type="match status" value="1"/>
</dbReference>
<sequence>MAETAPVAAPDVAAAPTPAKAAPAKKPKKAAGGAKARKPAGPSVTELITKAVSASKERKGLSLAALKKALAAGGYDVEKSNSRIKLGLKSLVSKGTLVQTKGTGASGSFRLSKKSGDVKEKAPKKKTPAAKPKKPAAKKPAAAAKKPKKAVAVKKSPKKAKKPAAAATKKAAKSPKKVTKAAKPKKAVAVKSPAKAKAVKPKAAKPKATKPKAAKAKKAAPKKK</sequence>
<reference key="1">
    <citation type="journal article" date="1987" name="J. Biol. Chem.">
        <title>Characterization of the chicken histone H1 gene complement. Generation of a complete set of vertebrate H1 protein sequences.</title>
        <authorList>
            <person name="Coles L.S."/>
            <person name="Robins A.J."/>
            <person name="Madley L.K."/>
            <person name="Wells J.R.E."/>
        </authorList>
    </citation>
    <scope>NUCLEOTIDE SEQUENCE [GENOMIC DNA]</scope>
</reference>
<protein>
    <recommendedName>
        <fullName>Histone H1.03</fullName>
    </recommendedName>
</protein>
<proteinExistence type="inferred from homology"/>
<feature type="initiator methionine" description="Removed" evidence="3">
    <location>
        <position position="1"/>
    </location>
</feature>
<feature type="chain" id="PRO_0000195929" description="Histone H1.03">
    <location>
        <begin position="2"/>
        <end position="224"/>
    </location>
</feature>
<feature type="domain" description="H15" evidence="1">
    <location>
        <begin position="40"/>
        <end position="113"/>
    </location>
</feature>
<feature type="region of interest" description="Disordered" evidence="2">
    <location>
        <begin position="1"/>
        <end position="43"/>
    </location>
</feature>
<feature type="region of interest" description="Disordered" evidence="2">
    <location>
        <begin position="99"/>
        <end position="224"/>
    </location>
</feature>
<feature type="compositionally biased region" description="Low complexity" evidence="2">
    <location>
        <begin position="1"/>
        <end position="22"/>
    </location>
</feature>
<feature type="compositionally biased region" description="Low complexity" evidence="2">
    <location>
        <begin position="30"/>
        <end position="42"/>
    </location>
</feature>
<feature type="compositionally biased region" description="Basic residues" evidence="2">
    <location>
        <begin position="122"/>
        <end position="137"/>
    </location>
</feature>
<feature type="compositionally biased region" description="Basic residues" evidence="2">
    <location>
        <begin position="145"/>
        <end position="162"/>
    </location>
</feature>
<feature type="compositionally biased region" description="Basic residues" evidence="2">
    <location>
        <begin position="170"/>
        <end position="188"/>
    </location>
</feature>
<feature type="compositionally biased region" description="Basic residues" evidence="2">
    <location>
        <begin position="197"/>
        <end position="224"/>
    </location>
</feature>
<comment type="function">
    <text>Histones H1 are necessary for the condensation of nucleosome chains into higher-order structures.</text>
</comment>
<comment type="subcellular location">
    <subcellularLocation>
        <location>Nucleus</location>
    </subcellularLocation>
    <subcellularLocation>
        <location>Chromosome</location>
    </subcellularLocation>
</comment>
<comment type="similarity">
    <text evidence="1">Belongs to the histone H1/H5 family.</text>
</comment>
<evidence type="ECO:0000255" key="1">
    <source>
        <dbReference type="PROSITE-ProRule" id="PRU00837"/>
    </source>
</evidence>
<evidence type="ECO:0000256" key="2">
    <source>
        <dbReference type="SAM" id="MobiDB-lite"/>
    </source>
</evidence>
<evidence type="ECO:0000305" key="3"/>
<accession>P08285</accession>
<organism>
    <name type="scientific">Gallus gallus</name>
    <name type="common">Chicken</name>
    <dbReference type="NCBI Taxonomy" id="9031"/>
    <lineage>
        <taxon>Eukaryota</taxon>
        <taxon>Metazoa</taxon>
        <taxon>Chordata</taxon>
        <taxon>Craniata</taxon>
        <taxon>Vertebrata</taxon>
        <taxon>Euteleostomi</taxon>
        <taxon>Archelosauria</taxon>
        <taxon>Archosauria</taxon>
        <taxon>Dinosauria</taxon>
        <taxon>Saurischia</taxon>
        <taxon>Theropoda</taxon>
        <taxon>Coelurosauria</taxon>
        <taxon>Aves</taxon>
        <taxon>Neognathae</taxon>
        <taxon>Galloanserae</taxon>
        <taxon>Galliformes</taxon>
        <taxon>Phasianidae</taxon>
        <taxon>Phasianinae</taxon>
        <taxon>Gallus</taxon>
    </lineage>
</organism>